<accession>A6UFD9</accession>
<organism>
    <name type="scientific">Sinorhizobium medicae (strain WSM419)</name>
    <name type="common">Ensifer medicae</name>
    <dbReference type="NCBI Taxonomy" id="366394"/>
    <lineage>
        <taxon>Bacteria</taxon>
        <taxon>Pseudomonadati</taxon>
        <taxon>Pseudomonadota</taxon>
        <taxon>Alphaproteobacteria</taxon>
        <taxon>Hyphomicrobiales</taxon>
        <taxon>Rhizobiaceae</taxon>
        <taxon>Sinorhizobium/Ensifer group</taxon>
        <taxon>Sinorhizobium</taxon>
    </lineage>
</organism>
<keyword id="KW-0378">Hydrolase</keyword>
<keyword id="KW-0460">Magnesium</keyword>
<keyword id="KW-0479">Metal-binding</keyword>
<keyword id="KW-0546">Nucleotide metabolism</keyword>
<sequence length="160" mass="16810">MHRPENRADLTPDLTLVRLSHGEGLDLPAYETAGAAGMDLRAAVPADEPMTIRPGARTLVPTGFVFEIPAGHEGQIRPRSGLAFKHGITCLNTPGTVDSDYRGEVKVLLVNLGSDDFVVERGMRIAQMVIAPVTQMAIREADGASTTARGGGGFGSTGLS</sequence>
<gene>
    <name evidence="1" type="primary">dut</name>
    <name type="ordered locus">Smed_3554</name>
</gene>
<feature type="chain" id="PRO_1000015523" description="Deoxyuridine 5'-triphosphate nucleotidohydrolase">
    <location>
        <begin position="1"/>
        <end position="160"/>
    </location>
</feature>
<feature type="binding site" evidence="1">
    <location>
        <begin position="79"/>
        <end position="81"/>
    </location>
    <ligand>
        <name>substrate</name>
    </ligand>
</feature>
<feature type="binding site" evidence="1">
    <location>
        <position position="92"/>
    </location>
    <ligand>
        <name>substrate</name>
    </ligand>
</feature>
<feature type="binding site" evidence="1">
    <location>
        <begin position="96"/>
        <end position="98"/>
    </location>
    <ligand>
        <name>substrate</name>
    </ligand>
</feature>
<feature type="binding site" evidence="1">
    <location>
        <position position="106"/>
    </location>
    <ligand>
        <name>substrate</name>
    </ligand>
</feature>
<dbReference type="EC" id="3.6.1.23" evidence="1"/>
<dbReference type="EMBL" id="CP000738">
    <property type="protein sequence ID" value="ABR62369.1"/>
    <property type="molecule type" value="Genomic_DNA"/>
</dbReference>
<dbReference type="RefSeq" id="WP_012067748.1">
    <property type="nucleotide sequence ID" value="NC_009636.1"/>
</dbReference>
<dbReference type="RefSeq" id="YP_001329204.1">
    <property type="nucleotide sequence ID" value="NC_009636.1"/>
</dbReference>
<dbReference type="SMR" id="A6UFD9"/>
<dbReference type="STRING" id="366394.Smed_3554"/>
<dbReference type="GeneID" id="61611108"/>
<dbReference type="KEGG" id="smd:Smed_3554"/>
<dbReference type="PATRIC" id="fig|366394.8.peg.6809"/>
<dbReference type="eggNOG" id="COG0756">
    <property type="taxonomic scope" value="Bacteria"/>
</dbReference>
<dbReference type="HOGENOM" id="CLU_068508_1_2_5"/>
<dbReference type="OrthoDB" id="9809956at2"/>
<dbReference type="UniPathway" id="UPA00610">
    <property type="reaction ID" value="UER00666"/>
</dbReference>
<dbReference type="Proteomes" id="UP000001108">
    <property type="component" value="Chromosome"/>
</dbReference>
<dbReference type="GO" id="GO:0004170">
    <property type="term" value="F:dUTP diphosphatase activity"/>
    <property type="evidence" value="ECO:0007669"/>
    <property type="project" value="UniProtKB-UniRule"/>
</dbReference>
<dbReference type="GO" id="GO:0000287">
    <property type="term" value="F:magnesium ion binding"/>
    <property type="evidence" value="ECO:0007669"/>
    <property type="project" value="UniProtKB-UniRule"/>
</dbReference>
<dbReference type="GO" id="GO:0006226">
    <property type="term" value="P:dUMP biosynthetic process"/>
    <property type="evidence" value="ECO:0007669"/>
    <property type="project" value="UniProtKB-UniRule"/>
</dbReference>
<dbReference type="GO" id="GO:0046081">
    <property type="term" value="P:dUTP catabolic process"/>
    <property type="evidence" value="ECO:0007669"/>
    <property type="project" value="InterPro"/>
</dbReference>
<dbReference type="CDD" id="cd07557">
    <property type="entry name" value="trimeric_dUTPase"/>
    <property type="match status" value="1"/>
</dbReference>
<dbReference type="Gene3D" id="2.70.40.10">
    <property type="match status" value="1"/>
</dbReference>
<dbReference type="HAMAP" id="MF_00116">
    <property type="entry name" value="dUTPase_bact"/>
    <property type="match status" value="1"/>
</dbReference>
<dbReference type="InterPro" id="IPR008181">
    <property type="entry name" value="dUTPase"/>
</dbReference>
<dbReference type="InterPro" id="IPR029054">
    <property type="entry name" value="dUTPase-like"/>
</dbReference>
<dbReference type="InterPro" id="IPR036157">
    <property type="entry name" value="dUTPase-like_sf"/>
</dbReference>
<dbReference type="InterPro" id="IPR033704">
    <property type="entry name" value="dUTPase_trimeric"/>
</dbReference>
<dbReference type="NCBIfam" id="TIGR00576">
    <property type="entry name" value="dut"/>
    <property type="match status" value="1"/>
</dbReference>
<dbReference type="NCBIfam" id="NF001862">
    <property type="entry name" value="PRK00601.1"/>
    <property type="match status" value="1"/>
</dbReference>
<dbReference type="PANTHER" id="PTHR11241">
    <property type="entry name" value="DEOXYURIDINE 5'-TRIPHOSPHATE NUCLEOTIDOHYDROLASE"/>
    <property type="match status" value="1"/>
</dbReference>
<dbReference type="PANTHER" id="PTHR11241:SF0">
    <property type="entry name" value="DEOXYURIDINE 5'-TRIPHOSPHATE NUCLEOTIDOHYDROLASE"/>
    <property type="match status" value="1"/>
</dbReference>
<dbReference type="Pfam" id="PF00692">
    <property type="entry name" value="dUTPase"/>
    <property type="match status" value="1"/>
</dbReference>
<dbReference type="SUPFAM" id="SSF51283">
    <property type="entry name" value="dUTPase-like"/>
    <property type="match status" value="1"/>
</dbReference>
<proteinExistence type="inferred from homology"/>
<comment type="function">
    <text evidence="1">This enzyme is involved in nucleotide metabolism: it produces dUMP, the immediate precursor of thymidine nucleotides and it decreases the intracellular concentration of dUTP so that uracil cannot be incorporated into DNA.</text>
</comment>
<comment type="catalytic activity">
    <reaction evidence="1">
        <text>dUTP + H2O = dUMP + diphosphate + H(+)</text>
        <dbReference type="Rhea" id="RHEA:10248"/>
        <dbReference type="ChEBI" id="CHEBI:15377"/>
        <dbReference type="ChEBI" id="CHEBI:15378"/>
        <dbReference type="ChEBI" id="CHEBI:33019"/>
        <dbReference type="ChEBI" id="CHEBI:61555"/>
        <dbReference type="ChEBI" id="CHEBI:246422"/>
        <dbReference type="EC" id="3.6.1.23"/>
    </reaction>
</comment>
<comment type="cofactor">
    <cofactor evidence="1">
        <name>Mg(2+)</name>
        <dbReference type="ChEBI" id="CHEBI:18420"/>
    </cofactor>
</comment>
<comment type="pathway">
    <text evidence="1">Pyrimidine metabolism; dUMP biosynthesis; dUMP from dCTP (dUTP route): step 2/2.</text>
</comment>
<comment type="similarity">
    <text evidence="1">Belongs to the dUTPase family.</text>
</comment>
<name>DUT_SINMW</name>
<reference key="1">
    <citation type="submission" date="2007-06" db="EMBL/GenBank/DDBJ databases">
        <title>Complete sequence of Sinorhizobium medicae WSM419 chromosome.</title>
        <authorList>
            <consortium name="US DOE Joint Genome Institute"/>
            <person name="Copeland A."/>
            <person name="Lucas S."/>
            <person name="Lapidus A."/>
            <person name="Barry K."/>
            <person name="Glavina del Rio T."/>
            <person name="Dalin E."/>
            <person name="Tice H."/>
            <person name="Pitluck S."/>
            <person name="Chain P."/>
            <person name="Malfatti S."/>
            <person name="Shin M."/>
            <person name="Vergez L."/>
            <person name="Schmutz J."/>
            <person name="Larimer F."/>
            <person name="Land M."/>
            <person name="Hauser L."/>
            <person name="Kyrpides N."/>
            <person name="Mikhailova N."/>
            <person name="Reeve W.G."/>
            <person name="Richardson P."/>
        </authorList>
    </citation>
    <scope>NUCLEOTIDE SEQUENCE [LARGE SCALE GENOMIC DNA]</scope>
    <source>
        <strain>WSM419</strain>
    </source>
</reference>
<protein>
    <recommendedName>
        <fullName evidence="1">Deoxyuridine 5'-triphosphate nucleotidohydrolase</fullName>
        <shortName evidence="1">dUTPase</shortName>
        <ecNumber evidence="1">3.6.1.23</ecNumber>
    </recommendedName>
    <alternativeName>
        <fullName evidence="1">dUTP pyrophosphatase</fullName>
    </alternativeName>
</protein>
<evidence type="ECO:0000255" key="1">
    <source>
        <dbReference type="HAMAP-Rule" id="MF_00116"/>
    </source>
</evidence>